<protein>
    <recommendedName>
        <fullName evidence="1">NAD-dependent protein deacetylase</fullName>
        <ecNumber evidence="1 2">2.3.1.286</ecNumber>
    </recommendedName>
    <alternativeName>
        <fullName evidence="1">Regulatory protein SIR2 homolog</fullName>
    </alternativeName>
    <alternativeName>
        <fullName>ssSir2</fullName>
    </alternativeName>
</protein>
<organism>
    <name type="scientific">Saccharolobus solfataricus (strain ATCC 35092 / DSM 1617 / JCM 11322 / P2)</name>
    <name type="common">Sulfolobus solfataricus</name>
    <dbReference type="NCBI Taxonomy" id="273057"/>
    <lineage>
        <taxon>Archaea</taxon>
        <taxon>Thermoproteota</taxon>
        <taxon>Thermoprotei</taxon>
        <taxon>Sulfolobales</taxon>
        <taxon>Sulfolobaceae</taxon>
        <taxon>Saccharolobus</taxon>
    </lineage>
</organism>
<name>NPD_SACS2</name>
<evidence type="ECO:0000255" key="1">
    <source>
        <dbReference type="HAMAP-Rule" id="MF_01968"/>
    </source>
</evidence>
<evidence type="ECO:0000255" key="2">
    <source>
        <dbReference type="PROSITE-ProRule" id="PRU00236"/>
    </source>
</evidence>
<evidence type="ECO:0000269" key="3">
    <source>
    </source>
</evidence>
<evidence type="ECO:0000269" key="4">
    <source>
    </source>
</evidence>
<evidence type="ECO:0000305" key="5"/>
<feature type="chain" id="PRO_0000110388" description="NAD-dependent protein deacetylase">
    <location>
        <begin position="1"/>
        <end position="247"/>
    </location>
</feature>
<feature type="domain" description="Deacetylase sirtuin-type" evidence="2">
    <location>
        <begin position="1"/>
        <end position="244"/>
    </location>
</feature>
<feature type="active site" description="Proton acceptor" evidence="2">
    <location>
        <position position="116"/>
    </location>
</feature>
<feature type="binding site" evidence="1">
    <location>
        <position position="22"/>
    </location>
    <ligand>
        <name>NAD(+)</name>
        <dbReference type="ChEBI" id="CHEBI:57540"/>
    </ligand>
</feature>
<feature type="binding site" evidence="1">
    <location>
        <position position="26"/>
    </location>
    <ligand>
        <name>NAD(+)</name>
        <dbReference type="ChEBI" id="CHEBI:57540"/>
    </ligand>
</feature>
<feature type="binding site" evidence="1">
    <location>
        <position position="33"/>
    </location>
    <ligand>
        <name>NAD(+)</name>
        <dbReference type="ChEBI" id="CHEBI:57540"/>
    </ligand>
</feature>
<feature type="binding site" evidence="1">
    <location>
        <position position="33"/>
    </location>
    <ligand>
        <name>nicotinamide</name>
        <dbReference type="ChEBI" id="CHEBI:17154"/>
    </ligand>
</feature>
<feature type="binding site" evidence="1">
    <location>
        <position position="34"/>
    </location>
    <ligand>
        <name>NAD(+)</name>
        <dbReference type="ChEBI" id="CHEBI:57540"/>
    </ligand>
</feature>
<feature type="binding site" evidence="1">
    <location>
        <position position="98"/>
    </location>
    <ligand>
        <name>NAD(+)</name>
        <dbReference type="ChEBI" id="CHEBI:57540"/>
    </ligand>
</feature>
<feature type="binding site" evidence="1">
    <location>
        <position position="100"/>
    </location>
    <ligand>
        <name>NAD(+)</name>
        <dbReference type="ChEBI" id="CHEBI:57540"/>
    </ligand>
</feature>
<feature type="binding site" evidence="1">
    <location>
        <position position="100"/>
    </location>
    <ligand>
        <name>nicotinamide</name>
        <dbReference type="ChEBI" id="CHEBI:17154"/>
    </ligand>
</feature>
<feature type="binding site" evidence="1">
    <location>
        <position position="101"/>
    </location>
    <ligand>
        <name>NAD(+)</name>
        <dbReference type="ChEBI" id="CHEBI:57540"/>
    </ligand>
</feature>
<feature type="binding site" evidence="1">
    <location>
        <position position="101"/>
    </location>
    <ligand>
        <name>nicotinamide</name>
        <dbReference type="ChEBI" id="CHEBI:17154"/>
    </ligand>
</feature>
<feature type="binding site" evidence="1">
    <location>
        <position position="116"/>
    </location>
    <ligand>
        <name>NAD(+)</name>
        <dbReference type="ChEBI" id="CHEBI:57540"/>
    </ligand>
</feature>
<feature type="binding site" evidence="1">
    <location>
        <position position="124"/>
    </location>
    <ligand>
        <name>Zn(2+)</name>
        <dbReference type="ChEBI" id="CHEBI:29105"/>
    </ligand>
</feature>
<feature type="binding site" evidence="1">
    <location>
        <position position="127"/>
    </location>
    <ligand>
        <name>Zn(2+)</name>
        <dbReference type="ChEBI" id="CHEBI:29105"/>
    </ligand>
</feature>
<feature type="binding site" evidence="1">
    <location>
        <position position="149"/>
    </location>
    <ligand>
        <name>Zn(2+)</name>
        <dbReference type="ChEBI" id="CHEBI:29105"/>
    </ligand>
</feature>
<feature type="binding site" evidence="1">
    <location>
        <position position="151"/>
    </location>
    <ligand>
        <name>Zn(2+)</name>
        <dbReference type="ChEBI" id="CHEBI:29105"/>
    </ligand>
</feature>
<feature type="binding site" evidence="1">
    <location>
        <position position="187"/>
    </location>
    <ligand>
        <name>NAD(+)</name>
        <dbReference type="ChEBI" id="CHEBI:57540"/>
    </ligand>
</feature>
<feature type="binding site" evidence="1">
    <location>
        <position position="188"/>
    </location>
    <ligand>
        <name>NAD(+)</name>
        <dbReference type="ChEBI" id="CHEBI:57540"/>
    </ligand>
</feature>
<feature type="binding site" evidence="1">
    <location>
        <position position="212"/>
    </location>
    <ligand>
        <name>NAD(+)</name>
        <dbReference type="ChEBI" id="CHEBI:57540"/>
    </ligand>
</feature>
<feature type="binding site" evidence="1">
    <location>
        <position position="230"/>
    </location>
    <ligand>
        <name>NAD(+)</name>
        <dbReference type="ChEBI" id="CHEBI:57540"/>
    </ligand>
</feature>
<feature type="mutagenesis site" description="Loss of function." evidence="3">
    <original>H</original>
    <variation>Y</variation>
    <location>
        <position position="116"/>
    </location>
</feature>
<keyword id="KW-0963">Cytoplasm</keyword>
<keyword id="KW-0479">Metal-binding</keyword>
<keyword id="KW-0520">NAD</keyword>
<keyword id="KW-1185">Reference proteome</keyword>
<keyword id="KW-0804">Transcription</keyword>
<keyword id="KW-0805">Transcription regulation</keyword>
<keyword id="KW-0808">Transferase</keyword>
<keyword id="KW-0862">Zinc</keyword>
<gene>
    <name evidence="1" type="primary">cobB</name>
    <name type="ordered locus">SSO2478</name>
</gene>
<comment type="function">
    <text evidence="1 3">NAD-dependent protein deacetylase which modulates the activities of several enzymes which are inactive in their acetylated form. Deacetylates the N-terminal lysine residue of albA1, the major archaeal DNA compaction protein and that, in turn, increases albA1's DNA binding affinity, thereby repressing transcription.</text>
</comment>
<comment type="catalytic activity">
    <reaction evidence="1">
        <text>N(6)-acetyl-L-lysyl-[protein] + NAD(+) + H2O = 2''-O-acetyl-ADP-D-ribose + nicotinamide + L-lysyl-[protein]</text>
        <dbReference type="Rhea" id="RHEA:43636"/>
        <dbReference type="Rhea" id="RHEA-COMP:9752"/>
        <dbReference type="Rhea" id="RHEA-COMP:10731"/>
        <dbReference type="ChEBI" id="CHEBI:15377"/>
        <dbReference type="ChEBI" id="CHEBI:17154"/>
        <dbReference type="ChEBI" id="CHEBI:29969"/>
        <dbReference type="ChEBI" id="CHEBI:57540"/>
        <dbReference type="ChEBI" id="CHEBI:61930"/>
        <dbReference type="ChEBI" id="CHEBI:83767"/>
        <dbReference type="EC" id="2.3.1.286"/>
    </reaction>
</comment>
<comment type="cofactor">
    <cofactor evidence="1">
        <name>Zn(2+)</name>
        <dbReference type="ChEBI" id="CHEBI:29105"/>
    </cofactor>
    <text evidence="1">Binds 1 zinc ion per subunit.</text>
</comment>
<comment type="subunit">
    <text evidence="5">Monomer.</text>
</comment>
<comment type="subcellular location">
    <subcellularLocation>
        <location evidence="1">Cytoplasm</location>
    </subcellularLocation>
</comment>
<comment type="developmental stage">
    <text evidence="4">Expression increases during stationary phase.</text>
</comment>
<comment type="similarity">
    <text evidence="1">Belongs to the sirtuin family. Class U subfamily.</text>
</comment>
<sequence>MIYEKVAEELISSSYTIAFTGAGISTASGIPDFRGPQGLWKKYSPELASIEYFEKDPKNFWGFYSLRMRGLFEAQPNKAHYSLAELEKMGIIKVIITQNIDGLHQKAGSKNVIELHGTMRRSYCVLCLRTYDSLNVLSMIEKGNLPPRCDCGGIIRPDVVLFGEPVKNIYEALSIAYESDLVISIGSSLTVYPANLIPQTVKERGGKLIILNMEETPLDSIADYVVREPVEISLPKILENVRQKILS</sequence>
<accession>Q97VX5</accession>
<reference key="1">
    <citation type="journal article" date="2001" name="Proc. Natl. Acad. Sci. U.S.A.">
        <title>The complete genome of the crenarchaeon Sulfolobus solfataricus P2.</title>
        <authorList>
            <person name="She Q."/>
            <person name="Singh R.K."/>
            <person name="Confalonieri F."/>
            <person name="Zivanovic Y."/>
            <person name="Allard G."/>
            <person name="Awayez M.J."/>
            <person name="Chan-Weiher C.C.-Y."/>
            <person name="Clausen I.G."/>
            <person name="Curtis B.A."/>
            <person name="De Moors A."/>
            <person name="Erauso G."/>
            <person name="Fletcher C."/>
            <person name="Gordon P.M.K."/>
            <person name="Heikamp-de Jong I."/>
            <person name="Jeffries A.C."/>
            <person name="Kozera C.J."/>
            <person name="Medina N."/>
            <person name="Peng X."/>
            <person name="Thi-Ngoc H.P."/>
            <person name="Redder P."/>
            <person name="Schenk M.E."/>
            <person name="Theriault C."/>
            <person name="Tolstrup N."/>
            <person name="Charlebois R.L."/>
            <person name="Doolittle W.F."/>
            <person name="Duguet M."/>
            <person name="Gaasterland T."/>
            <person name="Garrett R.A."/>
            <person name="Ragan M.A."/>
            <person name="Sensen C.W."/>
            <person name="Van der Oost J."/>
        </authorList>
    </citation>
    <scope>NUCLEOTIDE SEQUENCE [LARGE SCALE GENOMIC DNA]</scope>
    <source>
        <strain>ATCC 35092 / DSM 1617 / JCM 11322 / P2</strain>
    </source>
</reference>
<reference key="2">
    <citation type="journal article" date="2002" name="Science">
        <title>The interaction of Alba, a conserved archaeal chromatin protein, with Sir2 and its regulation by acetylation.</title>
        <authorList>
            <person name="Bell S.D."/>
            <person name="Botting C.H."/>
            <person name="Wardleworth B.N."/>
            <person name="Jackson S.P."/>
            <person name="White M.F."/>
        </authorList>
    </citation>
    <scope>FUNCTION</scope>
    <scope>MUTAGENESIS OF HIS-116</scope>
    <source>
        <strain>ATCC 35092 / DSM 1617 / JCM 11322 / P2</strain>
    </source>
</reference>
<reference evidence="5" key="3">
    <citation type="journal article" date="2022" name="Biomolecules">
        <title>Interplay between Alba and Cren7 Regulates Chromatin Compaction in Sulfolobus solfataricus.</title>
        <authorList>
            <person name="Cajili M.K.M."/>
            <person name="Prieto E.I."/>
        </authorList>
    </citation>
    <scope>DEVELOPMENTAL STAGE</scope>
</reference>
<dbReference type="EC" id="2.3.1.286" evidence="1 2"/>
<dbReference type="EMBL" id="AE006641">
    <property type="protein sequence ID" value="AAK42615.1"/>
    <property type="molecule type" value="Genomic_DNA"/>
</dbReference>
<dbReference type="PIR" id="H90419">
    <property type="entry name" value="H90419"/>
</dbReference>
<dbReference type="RefSeq" id="WP_010923883.1">
    <property type="nucleotide sequence ID" value="NC_002754.1"/>
</dbReference>
<dbReference type="SMR" id="Q97VX5"/>
<dbReference type="FunCoup" id="Q97VX5">
    <property type="interactions" value="130"/>
</dbReference>
<dbReference type="STRING" id="273057.SSO2478"/>
<dbReference type="PaxDb" id="273057-SSO2478"/>
<dbReference type="EnsemblBacteria" id="AAK42615">
    <property type="protein sequence ID" value="AAK42615"/>
    <property type="gene ID" value="SSO2478"/>
</dbReference>
<dbReference type="GeneID" id="1453942"/>
<dbReference type="KEGG" id="sso:SSO2478"/>
<dbReference type="PATRIC" id="fig|273057.12.peg.2556"/>
<dbReference type="eggNOG" id="arCOG04248">
    <property type="taxonomic scope" value="Archaea"/>
</dbReference>
<dbReference type="HOGENOM" id="CLU_023643_3_1_2"/>
<dbReference type="InParanoid" id="Q97VX5"/>
<dbReference type="PhylomeDB" id="Q97VX5"/>
<dbReference type="BRENDA" id="2.3.1.B42">
    <property type="organism ID" value="6163"/>
</dbReference>
<dbReference type="Proteomes" id="UP000001974">
    <property type="component" value="Chromosome"/>
</dbReference>
<dbReference type="GO" id="GO:0005737">
    <property type="term" value="C:cytoplasm"/>
    <property type="evidence" value="ECO:0007669"/>
    <property type="project" value="UniProtKB-SubCell"/>
</dbReference>
<dbReference type="GO" id="GO:0017136">
    <property type="term" value="F:histone deacetylase activity, NAD-dependent"/>
    <property type="evidence" value="ECO:0000318"/>
    <property type="project" value="GO_Central"/>
</dbReference>
<dbReference type="GO" id="GO:0070403">
    <property type="term" value="F:NAD+ binding"/>
    <property type="evidence" value="ECO:0000318"/>
    <property type="project" value="GO_Central"/>
</dbReference>
<dbReference type="GO" id="GO:0008270">
    <property type="term" value="F:zinc ion binding"/>
    <property type="evidence" value="ECO:0007669"/>
    <property type="project" value="UniProtKB-UniRule"/>
</dbReference>
<dbReference type="CDD" id="cd01413">
    <property type="entry name" value="SIR2_Af2"/>
    <property type="match status" value="1"/>
</dbReference>
<dbReference type="Gene3D" id="3.30.1600.10">
    <property type="entry name" value="SIR2/SIRT2 'Small Domain"/>
    <property type="match status" value="1"/>
</dbReference>
<dbReference type="Gene3D" id="3.40.50.1220">
    <property type="entry name" value="TPP-binding domain"/>
    <property type="match status" value="1"/>
</dbReference>
<dbReference type="HAMAP" id="MF_01968">
    <property type="entry name" value="Sirtuin_ClassU"/>
    <property type="match status" value="1"/>
</dbReference>
<dbReference type="InterPro" id="IPR029035">
    <property type="entry name" value="DHS-like_NAD/FAD-binding_dom"/>
</dbReference>
<dbReference type="InterPro" id="IPR050134">
    <property type="entry name" value="NAD-dep_sirtuin_deacylases"/>
</dbReference>
<dbReference type="InterPro" id="IPR003000">
    <property type="entry name" value="Sirtuin"/>
</dbReference>
<dbReference type="InterPro" id="IPR026591">
    <property type="entry name" value="Sirtuin_cat_small_dom_sf"/>
</dbReference>
<dbReference type="InterPro" id="IPR028628">
    <property type="entry name" value="Sirtuin_class_U"/>
</dbReference>
<dbReference type="InterPro" id="IPR026590">
    <property type="entry name" value="Ssirtuin_cat_dom"/>
</dbReference>
<dbReference type="NCBIfam" id="NF001753">
    <property type="entry name" value="PRK00481.1-3"/>
    <property type="match status" value="1"/>
</dbReference>
<dbReference type="NCBIfam" id="NF040867">
    <property type="entry name" value="prot_deacyl_CobB"/>
    <property type="match status" value="1"/>
</dbReference>
<dbReference type="PANTHER" id="PTHR11085:SF11">
    <property type="entry name" value="NAD-DEPENDENT PROTEIN DEACETYLASE"/>
    <property type="match status" value="1"/>
</dbReference>
<dbReference type="PANTHER" id="PTHR11085">
    <property type="entry name" value="NAD-DEPENDENT PROTEIN DEACYLASE SIRTUIN-5, MITOCHONDRIAL-RELATED"/>
    <property type="match status" value="1"/>
</dbReference>
<dbReference type="Pfam" id="PF02146">
    <property type="entry name" value="SIR2"/>
    <property type="match status" value="1"/>
</dbReference>
<dbReference type="SUPFAM" id="SSF52467">
    <property type="entry name" value="DHS-like NAD/FAD-binding domain"/>
    <property type="match status" value="1"/>
</dbReference>
<dbReference type="PROSITE" id="PS50305">
    <property type="entry name" value="SIRTUIN"/>
    <property type="match status" value="1"/>
</dbReference>
<proteinExistence type="evidence at protein level"/>